<evidence type="ECO:0000255" key="1">
    <source>
        <dbReference type="HAMAP-Rule" id="MF_01331"/>
    </source>
</evidence>
<evidence type="ECO:0000305" key="2"/>
<name>RL22_NITV2</name>
<organism>
    <name type="scientific">Nitratidesulfovibrio vulgaris (strain ATCC 29579 / DSM 644 / CCUG 34227 / NCIMB 8303 / VKM B-1760 / Hildenborough)</name>
    <name type="common">Desulfovibrio vulgaris</name>
    <dbReference type="NCBI Taxonomy" id="882"/>
    <lineage>
        <taxon>Bacteria</taxon>
        <taxon>Pseudomonadati</taxon>
        <taxon>Thermodesulfobacteriota</taxon>
        <taxon>Desulfovibrionia</taxon>
        <taxon>Desulfovibrionales</taxon>
        <taxon>Desulfovibrionaceae</taxon>
        <taxon>Nitratidesulfovibrio</taxon>
    </lineage>
</organism>
<proteinExistence type="inferred from homology"/>
<sequence length="112" mass="12483">MESRATAKFMRVSPRKTRLVARNIDGLPVEDAMNLLRFTPNKPAGVLYDVLRSALANAQQMPGVDVDAMVVKQVVVNEGPSWKRFLPRAQGRATRIKKRTSHITVILAEGQE</sequence>
<feature type="chain" id="PRO_0000125152" description="Large ribosomal subunit protein uL22">
    <location>
        <begin position="1"/>
        <end position="112"/>
    </location>
</feature>
<dbReference type="EMBL" id="AE017285">
    <property type="protein sequence ID" value="AAS95786.1"/>
    <property type="molecule type" value="Genomic_DNA"/>
</dbReference>
<dbReference type="RefSeq" id="WP_010938603.1">
    <property type="nucleotide sequence ID" value="NC_002937.3"/>
</dbReference>
<dbReference type="RefSeq" id="YP_010527.1">
    <property type="nucleotide sequence ID" value="NC_002937.3"/>
</dbReference>
<dbReference type="SMR" id="Q72CH5"/>
<dbReference type="STRING" id="882.DVU_1308"/>
<dbReference type="PaxDb" id="882-DVU_1308"/>
<dbReference type="EnsemblBacteria" id="AAS95786">
    <property type="protein sequence ID" value="AAS95786"/>
    <property type="gene ID" value="DVU_1308"/>
</dbReference>
<dbReference type="KEGG" id="dvu:DVU_1308"/>
<dbReference type="PATRIC" id="fig|882.5.peg.1220"/>
<dbReference type="eggNOG" id="COG0091">
    <property type="taxonomic scope" value="Bacteria"/>
</dbReference>
<dbReference type="HOGENOM" id="CLU_083987_3_3_7"/>
<dbReference type="OrthoDB" id="9805969at2"/>
<dbReference type="PhylomeDB" id="Q72CH5"/>
<dbReference type="Proteomes" id="UP000002194">
    <property type="component" value="Chromosome"/>
</dbReference>
<dbReference type="GO" id="GO:0022625">
    <property type="term" value="C:cytosolic large ribosomal subunit"/>
    <property type="evidence" value="ECO:0007669"/>
    <property type="project" value="TreeGrafter"/>
</dbReference>
<dbReference type="GO" id="GO:0019843">
    <property type="term" value="F:rRNA binding"/>
    <property type="evidence" value="ECO:0007669"/>
    <property type="project" value="UniProtKB-UniRule"/>
</dbReference>
<dbReference type="GO" id="GO:0003735">
    <property type="term" value="F:structural constituent of ribosome"/>
    <property type="evidence" value="ECO:0007669"/>
    <property type="project" value="InterPro"/>
</dbReference>
<dbReference type="GO" id="GO:0006412">
    <property type="term" value="P:translation"/>
    <property type="evidence" value="ECO:0007669"/>
    <property type="project" value="UniProtKB-UniRule"/>
</dbReference>
<dbReference type="CDD" id="cd00336">
    <property type="entry name" value="Ribosomal_L22"/>
    <property type="match status" value="1"/>
</dbReference>
<dbReference type="Gene3D" id="3.90.470.10">
    <property type="entry name" value="Ribosomal protein L22/L17"/>
    <property type="match status" value="1"/>
</dbReference>
<dbReference type="HAMAP" id="MF_01331_B">
    <property type="entry name" value="Ribosomal_uL22_B"/>
    <property type="match status" value="1"/>
</dbReference>
<dbReference type="InterPro" id="IPR001063">
    <property type="entry name" value="Ribosomal_uL22"/>
</dbReference>
<dbReference type="InterPro" id="IPR005727">
    <property type="entry name" value="Ribosomal_uL22_bac/chlpt-type"/>
</dbReference>
<dbReference type="InterPro" id="IPR047867">
    <property type="entry name" value="Ribosomal_uL22_bac/org-type"/>
</dbReference>
<dbReference type="InterPro" id="IPR018260">
    <property type="entry name" value="Ribosomal_uL22_CS"/>
</dbReference>
<dbReference type="InterPro" id="IPR036394">
    <property type="entry name" value="Ribosomal_uL22_sf"/>
</dbReference>
<dbReference type="NCBIfam" id="TIGR01044">
    <property type="entry name" value="rplV_bact"/>
    <property type="match status" value="1"/>
</dbReference>
<dbReference type="PANTHER" id="PTHR13501">
    <property type="entry name" value="CHLOROPLAST 50S RIBOSOMAL PROTEIN L22-RELATED"/>
    <property type="match status" value="1"/>
</dbReference>
<dbReference type="PANTHER" id="PTHR13501:SF8">
    <property type="entry name" value="LARGE RIBOSOMAL SUBUNIT PROTEIN UL22M"/>
    <property type="match status" value="1"/>
</dbReference>
<dbReference type="Pfam" id="PF00237">
    <property type="entry name" value="Ribosomal_L22"/>
    <property type="match status" value="1"/>
</dbReference>
<dbReference type="SUPFAM" id="SSF54843">
    <property type="entry name" value="Ribosomal protein L22"/>
    <property type="match status" value="1"/>
</dbReference>
<dbReference type="PROSITE" id="PS00464">
    <property type="entry name" value="RIBOSOMAL_L22"/>
    <property type="match status" value="1"/>
</dbReference>
<accession>Q72CH5</accession>
<reference key="1">
    <citation type="journal article" date="2004" name="Nat. Biotechnol.">
        <title>The genome sequence of the anaerobic, sulfate-reducing bacterium Desulfovibrio vulgaris Hildenborough.</title>
        <authorList>
            <person name="Heidelberg J.F."/>
            <person name="Seshadri R."/>
            <person name="Haveman S.A."/>
            <person name="Hemme C.L."/>
            <person name="Paulsen I.T."/>
            <person name="Kolonay J.F."/>
            <person name="Eisen J.A."/>
            <person name="Ward N.L."/>
            <person name="Methe B.A."/>
            <person name="Brinkac L.M."/>
            <person name="Daugherty S.C."/>
            <person name="DeBoy R.T."/>
            <person name="Dodson R.J."/>
            <person name="Durkin A.S."/>
            <person name="Madupu R."/>
            <person name="Nelson W.C."/>
            <person name="Sullivan S.A."/>
            <person name="Fouts D.E."/>
            <person name="Haft D.H."/>
            <person name="Selengut J."/>
            <person name="Peterson J.D."/>
            <person name="Davidsen T.M."/>
            <person name="Zafar N."/>
            <person name="Zhou L."/>
            <person name="Radune D."/>
            <person name="Dimitrov G."/>
            <person name="Hance M."/>
            <person name="Tran K."/>
            <person name="Khouri H.M."/>
            <person name="Gill J."/>
            <person name="Utterback T.R."/>
            <person name="Feldblyum T.V."/>
            <person name="Wall J.D."/>
            <person name="Voordouw G."/>
            <person name="Fraser C.M."/>
        </authorList>
    </citation>
    <scope>NUCLEOTIDE SEQUENCE [LARGE SCALE GENOMIC DNA]</scope>
    <source>
        <strain>ATCC 29579 / DSM 644 / CCUG 34227 / NCIMB 8303 / VKM B-1760 / Hildenborough</strain>
    </source>
</reference>
<protein>
    <recommendedName>
        <fullName evidence="1">Large ribosomal subunit protein uL22</fullName>
    </recommendedName>
    <alternativeName>
        <fullName evidence="2">50S ribosomal protein L22</fullName>
    </alternativeName>
</protein>
<comment type="function">
    <text evidence="1">This protein binds specifically to 23S rRNA; its binding is stimulated by other ribosomal proteins, e.g. L4, L17, and L20. It is important during the early stages of 50S assembly. It makes multiple contacts with different domains of the 23S rRNA in the assembled 50S subunit and ribosome (By similarity).</text>
</comment>
<comment type="function">
    <text evidence="1">The globular domain of the protein is located near the polypeptide exit tunnel on the outside of the subunit, while an extended beta-hairpin is found that lines the wall of the exit tunnel in the center of the 70S ribosome.</text>
</comment>
<comment type="subunit">
    <text evidence="1">Part of the 50S ribosomal subunit.</text>
</comment>
<comment type="similarity">
    <text evidence="1">Belongs to the universal ribosomal protein uL22 family.</text>
</comment>
<gene>
    <name evidence="1" type="primary">rplV</name>
    <name type="ordered locus">DVU_1308</name>
</gene>
<keyword id="KW-1185">Reference proteome</keyword>
<keyword id="KW-0687">Ribonucleoprotein</keyword>
<keyword id="KW-0689">Ribosomal protein</keyword>
<keyword id="KW-0694">RNA-binding</keyword>
<keyword id="KW-0699">rRNA-binding</keyword>